<feature type="chain" id="PRO_0000428013" description="Uncharacterized PE-PGRS family protein PE_PGRS10">
    <location>
        <begin position="1"/>
        <end position="785"/>
    </location>
</feature>
<feature type="domain" description="PE" evidence="1">
    <location>
        <begin position="1"/>
        <end position="93"/>
    </location>
</feature>
<gene>
    <name type="primary">PE_PGRS10</name>
    <name type="ordered locus">MT0772.5</name>
</gene>
<name>PG10_MYCTO</name>
<sequence>MSWVMVSPELVVAAAADLAGIGSAISSANAAAAVNTTGLLTAGADEVSTAIAALFGAQGQAYQAASAQAAAFYAQFVQALSAGGGAYAAAEAAAVSPLLAPINAQFVAATGRPLIGNGANGAPGTGANGGPGGWLIGNGGAGGSGAPGAGAGGNGGAGGLFGSGGAGGASTDVAGGAGGAGGAGGNASMLFGAAGVGGVGGFSNGGATGGAGGAGGAGGLFGAGGEGGSGGSGNLTGGAGGAGGNAGTLATGDGGAGGTGGASRSGGFGGAGGAGGDAGMFFGSGGSGGAGGISRSVGDGAAGGAGGAPGLIGNGGNGGNGGASTGGGDGGPGGAGGIGVLIGNGGNGGXGGTGATLGKAGIGGTGGVLLGLDGFTPPASTSPLHTLQQDVINMVNDPFQTLTGRPLIGNGANGTPGTGADGGAGGWLFGNGGNGGQGTIGGVNGGAGGAGGAGGILFGTGGTGGSGGPGATGLGGIGGAGGAALLFGSGGAGGSGGAGAVGGNGGAGGNAGALLGAAGAGGAGGAGAVGGNGGAGGNGGLFANGGAGGPGGFGSPAGAGGIGGAGGNGGLFGAGGAGGNGGLFGAGGTGGAGSHSTAAGVSGGAGGAGGDAGLLSLGASGGAGGSGGSSLTAAGVVGGIGGAGGLLFGSGGAGGSGGFSNSGNGGAGGAGGDAGLLVGSGGAGGAGASATGAATGGDGGAGGKSGAFGLGGDGGAGGATGLSGAFHIGGKGGVGGSAVLIGNGGNGGNGGNSGNAGKSGGAPGPSGAGGAGGLLLGENGLNGLM</sequence>
<keyword id="KW-1185">Reference proteome</keyword>
<keyword id="KW-0677">Repeat</keyword>
<proteinExistence type="inferred from homology"/>
<organism>
    <name type="scientific">Mycobacterium tuberculosis (strain CDC 1551 / Oshkosh)</name>
    <dbReference type="NCBI Taxonomy" id="83331"/>
    <lineage>
        <taxon>Bacteria</taxon>
        <taxon>Bacillati</taxon>
        <taxon>Actinomycetota</taxon>
        <taxon>Actinomycetes</taxon>
        <taxon>Mycobacteriales</taxon>
        <taxon>Mycobacteriaceae</taxon>
        <taxon>Mycobacterium</taxon>
        <taxon>Mycobacterium tuberculosis complex</taxon>
    </lineage>
</organism>
<protein>
    <recommendedName>
        <fullName>Uncharacterized PE-PGRS family protein PE_PGRS10</fullName>
    </recommendedName>
</protein>
<dbReference type="EMBL" id="AE000516">
    <property type="protein sequence ID" value="AAK45011.1"/>
    <property type="molecule type" value="Genomic_DNA"/>
</dbReference>
<dbReference type="PIR" id="F70824">
    <property type="entry name" value="F70824"/>
</dbReference>
<dbReference type="RefSeq" id="WP_010924293.1">
    <property type="nucleotide sequence ID" value="NC_002755.2"/>
</dbReference>
<dbReference type="KEGG" id="mtc:MT0772.5"/>
<dbReference type="HOGENOM" id="CLU_000167_20_0_11"/>
<dbReference type="Proteomes" id="UP000001020">
    <property type="component" value="Chromosome"/>
</dbReference>
<dbReference type="Gene3D" id="1.10.287.850">
    <property type="entry name" value="HP0062-like domain"/>
    <property type="match status" value="1"/>
</dbReference>
<dbReference type="InterPro" id="IPR000084">
    <property type="entry name" value="PE-PGRS_N"/>
</dbReference>
<dbReference type="Pfam" id="PF00934">
    <property type="entry name" value="PE"/>
    <property type="match status" value="1"/>
</dbReference>
<dbReference type="SUPFAM" id="SSF140459">
    <property type="entry name" value="PE/PPE dimer-like"/>
    <property type="match status" value="1"/>
</dbReference>
<evidence type="ECO:0000255" key="1"/>
<evidence type="ECO:0000305" key="2"/>
<comment type="similarity">
    <text evidence="2">Belongs to the mycobacterial PE family. PGRS subfamily.</text>
</comment>
<accession>P9WIG0</accession>
<accession>L0T7L2</accession>
<accession>O53810</accession>
<reference key="1">
    <citation type="journal article" date="2002" name="J. Bacteriol.">
        <title>Whole-genome comparison of Mycobacterium tuberculosis clinical and laboratory strains.</title>
        <authorList>
            <person name="Fleischmann R.D."/>
            <person name="Alland D."/>
            <person name="Eisen J.A."/>
            <person name="Carpenter L."/>
            <person name="White O."/>
            <person name="Peterson J.D."/>
            <person name="DeBoy R.T."/>
            <person name="Dodson R.J."/>
            <person name="Gwinn M.L."/>
            <person name="Haft D.H."/>
            <person name="Hickey E.K."/>
            <person name="Kolonay J.F."/>
            <person name="Nelson W.C."/>
            <person name="Umayam L.A."/>
            <person name="Ermolaeva M.D."/>
            <person name="Salzberg S.L."/>
            <person name="Delcher A."/>
            <person name="Utterback T.R."/>
            <person name="Weidman J.F."/>
            <person name="Khouri H.M."/>
            <person name="Gill J."/>
            <person name="Mikula A."/>
            <person name="Bishai W."/>
            <person name="Jacobs W.R. Jr."/>
            <person name="Venter J.C."/>
            <person name="Fraser C.M."/>
        </authorList>
    </citation>
    <scope>NUCLEOTIDE SEQUENCE [LARGE SCALE GENOMIC DNA]</scope>
    <source>
        <strain>CDC 1551 / Oshkosh</strain>
    </source>
</reference>